<organism>
    <name type="scientific">Porphyromonas gingivalis</name>
    <name type="common">Bacteroides gingivalis</name>
    <dbReference type="NCBI Taxonomy" id="837"/>
    <lineage>
        <taxon>Bacteria</taxon>
        <taxon>Pseudomonadati</taxon>
        <taxon>Bacteroidota</taxon>
        <taxon>Bacteroidia</taxon>
        <taxon>Bacteroidales</taxon>
        <taxon>Porphyromonadaceae</taxon>
        <taxon>Porphyromonas</taxon>
    </lineage>
</organism>
<dbReference type="EMBL" id="U41807">
    <property type="protein sequence ID" value="AAB17128.1"/>
    <property type="molecule type" value="Genomic_DNA"/>
</dbReference>
<dbReference type="PIR" id="T28651">
    <property type="entry name" value="T28651"/>
</dbReference>
<dbReference type="SMR" id="Q51845"/>
<dbReference type="GO" id="GO:0008234">
    <property type="term" value="F:cysteine-type peptidase activity"/>
    <property type="evidence" value="ECO:0007669"/>
    <property type="project" value="UniProtKB-KW"/>
</dbReference>
<dbReference type="GO" id="GO:0006508">
    <property type="term" value="P:proteolysis"/>
    <property type="evidence" value="ECO:0007669"/>
    <property type="project" value="UniProtKB-KW"/>
</dbReference>
<dbReference type="FunFam" id="2.60.120.200:FF:000195">
    <property type="entry name" value="Lys-gingipain W83"/>
    <property type="match status" value="5"/>
</dbReference>
<dbReference type="Gene3D" id="2.60.120.200">
    <property type="match status" value="10"/>
</dbReference>
<dbReference type="Gene3D" id="2.60.40.10">
    <property type="entry name" value="Immunoglobulins"/>
    <property type="match status" value="5"/>
</dbReference>
<dbReference type="InterPro" id="IPR011628">
    <property type="entry name" value="Cleaved_adhesin"/>
</dbReference>
<dbReference type="InterPro" id="IPR003961">
    <property type="entry name" value="FN3_dom"/>
</dbReference>
<dbReference type="InterPro" id="IPR013783">
    <property type="entry name" value="Ig-like_fold"/>
</dbReference>
<dbReference type="InterPro" id="IPR018832">
    <property type="entry name" value="Pept_C25_gingipain_C"/>
</dbReference>
<dbReference type="NCBIfam" id="NF038128">
    <property type="entry name" value="choice_anch_J"/>
    <property type="match status" value="10"/>
</dbReference>
<dbReference type="Pfam" id="PF07675">
    <property type="entry name" value="Cleaved_Adhesin"/>
    <property type="match status" value="10"/>
</dbReference>
<dbReference type="Pfam" id="PF10365">
    <property type="entry name" value="DUF2436"/>
    <property type="match status" value="1"/>
</dbReference>
<dbReference type="SMART" id="SM00060">
    <property type="entry name" value="FN3"/>
    <property type="match status" value="6"/>
</dbReference>
<gene>
    <name type="primary">hagA</name>
</gene>
<proteinExistence type="inferred from homology"/>
<sequence length="2628" mass="283325">MRKLNSLFSLAVLLSLLCWGQTAAAQGGPKTAPSVTHQAVQKGIRTSKVKDLRDPIPAGMARIILEAHDVWEDGTGYQMLWDADHNQYGASIPEESFWFANGTIPAGLYDPFEYKVPVNADASFSPTNFVLDGTASADIPAGTYDYVIINPNPGIIYIVGEGVSKGNDYVVEAGKTYHFTVQRQGPGDAASVVVTGEGGNEFAPVQNLQWSVSGQTVTLTWQAPASDKRTYVLNESFDTQTLPNGWTMIDADGDGHNWLSTINVYNTATHTGDGAMFSKSWTASGGAKIDLSPDNYLVTPKVTVPENGKLSYWVSSQVPWTNEHYGVFLSTTGNEAANFTIKLLEETLGSDKPAPMNLVKSEGVKLPAPYQERTIDLSAYAGQQVYLAFRHFNSTGIFRLYLDDVAVSGEGSSNDYTYTVYRDNVVIAQNLAATTFNQENVAPGQYNYCVEVKYTAGVSPKVCKDVTVEGSNEFAHVQNLTGSAVGQKVTLKWDAPNGTPNPNPGTTTLSESFENGIPASWKTIDADGDGNNWTTTPPPGGTSFAGHNSAICASSASYINFEGPQNPDNYLVTPELSLPNGGTLTFWVCAQDANYASEHYAVYASSTGNDASNFANALLEEVLTAKTVVTAPEAIRGTRVQGTWYQKTVQLPAGTKYVAFRHFGCTDFFWINLDDVEIKANGKRADFTETFESSTHGEAPAEWTTIDADGDGQGWLCLSSGQLDWLTAHGGTNVVASFSWNGMALNPDNYLISKDVTGATKVKYYYAVNDGFPGDHYAVMISKTGTNAGDFTVVFEETPNGINKGGARFGLSTEADGAKPQSVWIERTVDLPAGTKYVAFRHYNCSDLNYILLDDIQFTMGGSPTPTDYTYTVYRDGTKIKEGLTETTFEEDGVATGNHEYCVEVKYTAGVSPKECVNVTVDPVQFNPVQNLTGSAVGQKVTLKWDAPNGTPNPNPNPNPGTTTLSESFENGIPASWKTIDADGDGNNWTTTPPPGGTSFAGHNSAICASSASYINFEGPQNPDNYLVTPELSLPNGGTLTFWVCAQDANYASEHYAVYASSTGNDASNFANALLEEVLTAKTVVTAPEAIRGTRVQGTWYQKTVQLPAGTKYVAFRHFGCTDFFWINLDDVEIKANGKRADFTETFESSTHGEAPAEWTTIDADGDGQGWLCLSSGQLGWLTAHGGTNVVASFSWNGMALNPDNYLISKDVTGATKVKYYYAVNDGFPGDHYAVMISKTGTNAGDFTVVFEETPNGINKGGARFGLSTEADGAKPQSVWIERTVDLPAGTKYVAFRHYNCSDLNYILLDDIQFTMGGSPTPTDYTYTVYRDGTKIKEGLTETTFEEDGVATGNHEYCVEVKYTAGVSPKECVNVTVDPVQFNPVQNLTGSAVGQKVTLKWDAPNGTPNPNPNPNPGTTTLSESFENGIPASWKTIDADGDGNNWTTTPPPGGTSFAGHNSAICASSASYINFEGPQNPDNYLVTPELSLPNGGTLTFWVCAQDANYASEHYAVYASSTGNDASNFANALLEEVLTAKTVVTAPEAIRGTRVQGTWYQKTVQLPAGTKYVAFRHFGCTDFFWINLDDVEIKANGKRADFTETFESSTHGEAPAEWTTIDADGDGQGWLCLSSGQLGWLTAHGGTNVVASFSWNGMALNPDNYLISKDVTGATKVKYYYAVNDGFPGDHYAVMISKTGTNAGDFTVVFEETPNGINKGGARFGLSTEADGAKPQSVWIERTVDLPAGTKYVAFRHYNCSDLNYILLDDIQFTMGGSPTPTDYTYTVYRDGTKIKEGLTETTFEEDGVATGNHEYCVEVKYTAGVSPKECVNVTVDPVQFNPVQNLTGSAVGQKVTLKWDAPNGTPNPNPNPNPGTTTLSESFENGIPASWKTIDADGDGNNWTTTPPPGGTSFAGHNSAICVSSASYINFEGPQNPDNYLVTPELSLPGGGTLTFWVCAQDANYASEHYAVYASSTGNDASNFANALLEEVLTAKTVVTAPEAIRGTRVQGTWYQKTVQLPAGTKYVAFRHFGCTDFFWINLDEVEIKANGKRADFTETFESSTHGEAPAEWTTIDADGDGQGWLCLSSGQLDWLTAHGGTNVVASFSWNGMALNPDNYLISKDVTGATKVKYYYAVNDGFPGDHYAVMISKTGTNAGDFTVVFEETPNGINKGGARFGLSTEADGAKPQSVWIERTVDLPAGTKYVAFRHYNCSDLNYILLDDIQFTMGGSPTPTDYTYTVYRDGTKIKEGLTETTFEEDGVATGNHEYCVEVKYTAGVSPKVCVNVTINPTQFNPVQNLTAEQAPNSMDAILKWNAPASKRAEVLNEDFENGIPSSWKTIDADGDGNNWTTTPPPGGSSFAGHNSAICVSSASYINFEGPQNPDNYLVTPELSLPGGGTLTFWVCAQDANYASEHYAVYASSTGNDASNFANALLEEVLTAKTVVTAPEAIRGTRVQGTWYQKTVQLPAGTKYVAFRHFGCTDFFWINLDDVVITSGNAPSYTYTIYRNNTQIASGVTETTYRDPDLATGFYTYGVKVVYPNGESAIETATLNITSLADVTAQKPYTLTVVGKTITVTCQGEAMIYDMNGRRLAAGRNTVVYTAQGGHYAVMVVVDGKSYVEKLAVK</sequence>
<comment type="function">
    <text>Agglutinates erythrocytes.</text>
</comment>
<comment type="similarity">
    <text evidence="3">Belongs to the peptidase C25 family.</text>
</comment>
<name>HAGA2_PORGN</name>
<evidence type="ECO:0000255" key="1"/>
<evidence type="ECO:0000256" key="2">
    <source>
        <dbReference type="SAM" id="MobiDB-lite"/>
    </source>
</evidence>
<evidence type="ECO:0000305" key="3"/>
<keyword id="KW-0348">Hemagglutinin</keyword>
<keyword id="KW-0378">Hydrolase</keyword>
<keyword id="KW-0645">Protease</keyword>
<keyword id="KW-0677">Repeat</keyword>
<keyword id="KW-0732">Signal</keyword>
<keyword id="KW-0788">Thiol protease</keyword>
<keyword id="KW-0843">Virulence</keyword>
<feature type="signal peptide" evidence="1">
    <location>
        <begin position="1"/>
        <end position="24"/>
    </location>
</feature>
<feature type="chain" id="PRO_0000026538" description="Hemagglutinin A">
    <location>
        <begin position="25"/>
        <end position="2628"/>
    </location>
</feature>
<feature type="region of interest" description="Peptidase C25-like 1">
    <location>
        <begin position="25"/>
        <end position="539"/>
    </location>
</feature>
<feature type="region of interest" description="Disordered" evidence="2">
    <location>
        <begin position="493"/>
        <end position="512"/>
    </location>
</feature>
<feature type="region of interest" description="Disordered" evidence="2">
    <location>
        <begin position="520"/>
        <end position="546"/>
    </location>
</feature>
<feature type="region of interest" description="Peptidase C25-like 2">
    <location>
        <begin position="540"/>
        <end position="995"/>
    </location>
</feature>
<feature type="region of interest" description="Disordered" evidence="2">
    <location>
        <begin position="944"/>
        <end position="1002"/>
    </location>
</feature>
<feature type="region of interest" description="Peptidase C25-like 3">
    <location>
        <begin position="996"/>
        <end position="1451"/>
    </location>
</feature>
<feature type="region of interest" description="Disordered" evidence="2">
    <location>
        <begin position="1400"/>
        <end position="1458"/>
    </location>
</feature>
<feature type="region of interest" description="Peptidase C25-like 4">
    <location>
        <begin position="1452"/>
        <end position="1907"/>
    </location>
</feature>
<feature type="region of interest" description="Disordered" evidence="2">
    <location>
        <begin position="1856"/>
        <end position="1881"/>
    </location>
</feature>
<feature type="region of interest" description="Disordered" evidence="2">
    <location>
        <begin position="1890"/>
        <end position="1909"/>
    </location>
</feature>
<feature type="region of interest" description="Peptidase C25-like 5">
    <location>
        <begin position="2074"/>
        <end position="2628"/>
    </location>
</feature>
<feature type="region of interest" description="Disordered" evidence="2">
    <location>
        <begin position="2336"/>
        <end position="2358"/>
    </location>
</feature>
<feature type="compositionally biased region" description="Low complexity" evidence="2">
    <location>
        <begin position="496"/>
        <end position="508"/>
    </location>
</feature>
<protein>
    <recommendedName>
        <fullName>Hemagglutinin A</fullName>
    </recommendedName>
</protein>
<accession>Q51845</accession>
<reference key="1">
    <citation type="journal article" date="1996" name="Infect. Immun.">
        <title>The hemagglutinin gene A (hagA) of Porphyromonas gingivalis 381 contains four large, contiguous, direct repeats.</title>
        <authorList>
            <person name="Han N."/>
            <person name="Whitlock J."/>
            <person name="Progulske-Fox A."/>
        </authorList>
    </citation>
    <scope>NUCLEOTIDE SEQUENCE [GENOMIC DNA]</scope>
    <source>
        <strain>ATCC BAA-1703 / FDC 381</strain>
    </source>
</reference>